<accession>Q3KJD8</accession>
<comment type="function">
    <text evidence="1">Involved in the biosynthesis of osmoregulated periplasmic glucans (OPGs).</text>
</comment>
<comment type="pathway">
    <text evidence="1">Glycan metabolism; osmoregulated periplasmic glucan (OPG) biosynthesis.</text>
</comment>
<comment type="subcellular location">
    <subcellularLocation>
        <location evidence="1">Cell inner membrane</location>
        <topology evidence="1">Multi-pass membrane protein</topology>
    </subcellularLocation>
</comment>
<comment type="similarity">
    <text evidence="1">Belongs to the glycosyltransferase 2 family. OpgH subfamily.</text>
</comment>
<name>OPGH_PSEPF</name>
<sequence>MSNSQVQPETLSEYLAHLPMTDEQRAELAGCQSFSELHERLSSKTFDAPTEAAQASVGKRLILSTAEELQDAEMLVLDASGRVSMKATPPIRRTKVVPEPWRTNILVRGWRRLTGRTNPPQPPKDANVLPAARWRTVGSIRRYILLVLMLGQTIVAGWYMKGIMPYQGWSFVDLEEVLHQPLLQTATQVLPYALQTSILIMFGILFCWVSAGFWTALMGFLELLTGHDKYRISGKSAGNEPIPKDARTALVMPICNEDVPRVFAGLRATFESVAATGDLDRFDFFVLSDSNDTDICVAEQQAWLDVCREAKGFGKIFYRRRRRRVKRKSGNLDDFCRRWGGDYKYMVVLDADSVMSGECLTSLVRLMEATPDAGIIQTAPRASGMDTLYARMQQFATRVYGPLFTAGLHFWQLGESHYWGHNAIIRMKPFIDHCALAPLPGKGAFSGAILSHDFVEAALMRRAGWGVWIAYDLPGSYEELPPNLLDELKRDRRWCHGNLMNFRLFLVKGMHPVHRAVFLTGVMSYLSAPLWFFFLVLSTALLAVNTLMEPQYFLEPRQLYPLWPQWHPDKAIALFSTTIVLLFLPKLLSIILIWAKGAKEFGGKFKVTLSMLLEMLFSMLLAPVRMIFHTRFVLAAFLGWAATWNSPQRDDDSTPWSEAVKRHGPQTLLGFFWALLVIWLNPSFLWWLVPIVGSLMLSIPVSVISSRVGLGLKSRDESLFLIPEEYNPPQALLATDQYTHENRWHALNDGFVRAVVDPQQNALACSLATSRHGQAEPIEWLRQERVRHAIKVGPAGLNNHDRLQLLSDPVALARLHEQVWAEGHAEWLDAWRASVKADPHAPLLPLKPVSLQAQPA</sequence>
<organism>
    <name type="scientific">Pseudomonas fluorescens (strain Pf0-1)</name>
    <dbReference type="NCBI Taxonomy" id="205922"/>
    <lineage>
        <taxon>Bacteria</taxon>
        <taxon>Pseudomonadati</taxon>
        <taxon>Pseudomonadota</taxon>
        <taxon>Gammaproteobacteria</taxon>
        <taxon>Pseudomonadales</taxon>
        <taxon>Pseudomonadaceae</taxon>
        <taxon>Pseudomonas</taxon>
    </lineage>
</organism>
<gene>
    <name evidence="1" type="primary">opgH</name>
    <name type="ordered locus">Pfl01_0374</name>
</gene>
<keyword id="KW-0997">Cell inner membrane</keyword>
<keyword id="KW-1003">Cell membrane</keyword>
<keyword id="KW-0328">Glycosyltransferase</keyword>
<keyword id="KW-0472">Membrane</keyword>
<keyword id="KW-0808">Transferase</keyword>
<keyword id="KW-0812">Transmembrane</keyword>
<keyword id="KW-1133">Transmembrane helix</keyword>
<protein>
    <recommendedName>
        <fullName evidence="1">Glucans biosynthesis glucosyltransferase H</fullName>
        <ecNumber evidence="1">2.4.1.-</ecNumber>
    </recommendedName>
</protein>
<evidence type="ECO:0000255" key="1">
    <source>
        <dbReference type="HAMAP-Rule" id="MF_01072"/>
    </source>
</evidence>
<dbReference type="EC" id="2.4.1.-" evidence="1"/>
<dbReference type="EMBL" id="CP000094">
    <property type="protein sequence ID" value="ABA72118.1"/>
    <property type="molecule type" value="Genomic_DNA"/>
</dbReference>
<dbReference type="RefSeq" id="WP_011332056.1">
    <property type="nucleotide sequence ID" value="NC_007492.2"/>
</dbReference>
<dbReference type="CAZy" id="GT2">
    <property type="family name" value="Glycosyltransferase Family 2"/>
</dbReference>
<dbReference type="KEGG" id="pfo:Pfl01_0374"/>
<dbReference type="eggNOG" id="COG2943">
    <property type="taxonomic scope" value="Bacteria"/>
</dbReference>
<dbReference type="HOGENOM" id="CLU_015730_0_0_6"/>
<dbReference type="UniPathway" id="UPA00637"/>
<dbReference type="Proteomes" id="UP000002704">
    <property type="component" value="Chromosome"/>
</dbReference>
<dbReference type="GO" id="GO:0005886">
    <property type="term" value="C:plasma membrane"/>
    <property type="evidence" value="ECO:0007669"/>
    <property type="project" value="UniProtKB-SubCell"/>
</dbReference>
<dbReference type="GO" id="GO:0016758">
    <property type="term" value="F:hexosyltransferase activity"/>
    <property type="evidence" value="ECO:0007669"/>
    <property type="project" value="UniProtKB-UniRule"/>
</dbReference>
<dbReference type="GO" id="GO:0009250">
    <property type="term" value="P:glucan biosynthetic process"/>
    <property type="evidence" value="ECO:0007669"/>
    <property type="project" value="UniProtKB-UniRule"/>
</dbReference>
<dbReference type="CDD" id="cd04191">
    <property type="entry name" value="Glucan_BSP_MdoH"/>
    <property type="match status" value="1"/>
</dbReference>
<dbReference type="FunFam" id="3.90.550.10:FF:000047">
    <property type="entry name" value="Glucans biosynthesis glucosyltransferase H"/>
    <property type="match status" value="1"/>
</dbReference>
<dbReference type="Gene3D" id="3.90.550.10">
    <property type="entry name" value="Spore Coat Polysaccharide Biosynthesis Protein SpsA, Chain A"/>
    <property type="match status" value="1"/>
</dbReference>
<dbReference type="HAMAP" id="MF_01072">
    <property type="entry name" value="MdoH_OpgH"/>
    <property type="match status" value="1"/>
</dbReference>
<dbReference type="InterPro" id="IPR023725">
    <property type="entry name" value="Glucans_biosynth_gluTrFase_H"/>
</dbReference>
<dbReference type="InterPro" id="IPR001173">
    <property type="entry name" value="Glyco_trans_2-like"/>
</dbReference>
<dbReference type="InterPro" id="IPR050321">
    <property type="entry name" value="Glycosyltr_2/OpgH_subfam"/>
</dbReference>
<dbReference type="InterPro" id="IPR029044">
    <property type="entry name" value="Nucleotide-diphossugar_trans"/>
</dbReference>
<dbReference type="NCBIfam" id="NF003955">
    <property type="entry name" value="PRK05454.1-1"/>
    <property type="match status" value="1"/>
</dbReference>
<dbReference type="NCBIfam" id="NF003958">
    <property type="entry name" value="PRK05454.2-1"/>
    <property type="match status" value="1"/>
</dbReference>
<dbReference type="NCBIfam" id="NF003962">
    <property type="entry name" value="PRK05454.2-5"/>
    <property type="match status" value="1"/>
</dbReference>
<dbReference type="PANTHER" id="PTHR43867">
    <property type="entry name" value="CELLULOSE SYNTHASE CATALYTIC SUBUNIT A [UDP-FORMING]"/>
    <property type="match status" value="1"/>
</dbReference>
<dbReference type="PANTHER" id="PTHR43867:SF5">
    <property type="entry name" value="GLUCANS BIOSYNTHESIS GLUCOSYLTRANSFERASE H"/>
    <property type="match status" value="1"/>
</dbReference>
<dbReference type="Pfam" id="PF00535">
    <property type="entry name" value="Glycos_transf_2"/>
    <property type="match status" value="1"/>
</dbReference>
<dbReference type="SUPFAM" id="SSF53448">
    <property type="entry name" value="Nucleotide-diphospho-sugar transferases"/>
    <property type="match status" value="1"/>
</dbReference>
<proteinExistence type="inferred from homology"/>
<feature type="chain" id="PRO_1000064612" description="Glucans biosynthesis glucosyltransferase H">
    <location>
        <begin position="1"/>
        <end position="856"/>
    </location>
</feature>
<feature type="transmembrane region" description="Helical" evidence="1">
    <location>
        <begin position="144"/>
        <end position="164"/>
    </location>
</feature>
<feature type="transmembrane region" description="Helical" evidence="1">
    <location>
        <begin position="198"/>
        <end position="218"/>
    </location>
</feature>
<feature type="transmembrane region" description="Helical" evidence="1">
    <location>
        <begin position="517"/>
        <end position="537"/>
    </location>
</feature>
<feature type="transmembrane region" description="Helical" evidence="1">
    <location>
        <begin position="574"/>
        <end position="594"/>
    </location>
</feature>
<feature type="transmembrane region" description="Helical" evidence="1">
    <location>
        <begin position="608"/>
        <end position="628"/>
    </location>
</feature>
<feature type="transmembrane region" description="Helical" evidence="1">
    <location>
        <begin position="691"/>
        <end position="711"/>
    </location>
</feature>
<reference key="1">
    <citation type="journal article" date="2009" name="Genome Biol.">
        <title>Genomic and genetic analyses of diversity and plant interactions of Pseudomonas fluorescens.</title>
        <authorList>
            <person name="Silby M.W."/>
            <person name="Cerdeno-Tarraga A.M."/>
            <person name="Vernikos G.S."/>
            <person name="Giddens S.R."/>
            <person name="Jackson R.W."/>
            <person name="Preston G.M."/>
            <person name="Zhang X.-X."/>
            <person name="Moon C.D."/>
            <person name="Gehrig S.M."/>
            <person name="Godfrey S.A.C."/>
            <person name="Knight C.G."/>
            <person name="Malone J.G."/>
            <person name="Robinson Z."/>
            <person name="Spiers A.J."/>
            <person name="Harris S."/>
            <person name="Challis G.L."/>
            <person name="Yaxley A.M."/>
            <person name="Harris D."/>
            <person name="Seeger K."/>
            <person name="Murphy L."/>
            <person name="Rutter S."/>
            <person name="Squares R."/>
            <person name="Quail M.A."/>
            <person name="Saunders E."/>
            <person name="Mavromatis K."/>
            <person name="Brettin T.S."/>
            <person name="Bentley S.D."/>
            <person name="Hothersall J."/>
            <person name="Stephens E."/>
            <person name="Thomas C.M."/>
            <person name="Parkhill J."/>
            <person name="Levy S.B."/>
            <person name="Rainey P.B."/>
            <person name="Thomson N.R."/>
        </authorList>
    </citation>
    <scope>NUCLEOTIDE SEQUENCE [LARGE SCALE GENOMIC DNA]</scope>
    <source>
        <strain>Pf0-1</strain>
    </source>
</reference>